<organism>
    <name type="scientific">Sus scrofa</name>
    <name type="common">Pig</name>
    <dbReference type="NCBI Taxonomy" id="9823"/>
    <lineage>
        <taxon>Eukaryota</taxon>
        <taxon>Metazoa</taxon>
        <taxon>Chordata</taxon>
        <taxon>Craniata</taxon>
        <taxon>Vertebrata</taxon>
        <taxon>Euteleostomi</taxon>
        <taxon>Mammalia</taxon>
        <taxon>Eutheria</taxon>
        <taxon>Laurasiatheria</taxon>
        <taxon>Artiodactyla</taxon>
        <taxon>Suina</taxon>
        <taxon>Suidae</taxon>
        <taxon>Sus</taxon>
    </lineage>
</organism>
<keyword id="KW-0002">3D-structure</keyword>
<keyword id="KW-0004">4Fe-4S</keyword>
<keyword id="KW-0007">Acetylation</keyword>
<keyword id="KW-0903">Direct protein sequencing</keyword>
<keyword id="KW-0408">Iron</keyword>
<keyword id="KW-0411">Iron-sulfur</keyword>
<keyword id="KW-0456">Lyase</keyword>
<keyword id="KW-0479">Metal-binding</keyword>
<keyword id="KW-0496">Mitochondrion</keyword>
<keyword id="KW-0597">Phosphoprotein</keyword>
<keyword id="KW-0873">Pyrrolidone carboxylic acid</keyword>
<keyword id="KW-1185">Reference proteome</keyword>
<keyword id="KW-0809">Transit peptide</keyword>
<keyword id="KW-0816">Tricarboxylic acid cycle</keyword>
<protein>
    <recommendedName>
        <fullName>Aconitate hydratase, mitochondrial</fullName>
        <shortName>Aconitase</shortName>
        <ecNumber evidence="5">4.2.1.3</ecNumber>
    </recommendedName>
    <alternativeName>
        <fullName>Citrate hydro-lyase</fullName>
    </alternativeName>
</protein>
<evidence type="ECO:0000250" key="1">
    <source>
        <dbReference type="UniProtKB" id="Q99798"/>
    </source>
</evidence>
<evidence type="ECO:0000250" key="2">
    <source>
        <dbReference type="UniProtKB" id="Q99KI0"/>
    </source>
</evidence>
<evidence type="ECO:0000250" key="3">
    <source>
        <dbReference type="UniProtKB" id="Q9ER34"/>
    </source>
</evidence>
<evidence type="ECO:0000256" key="4">
    <source>
        <dbReference type="SAM" id="MobiDB-lite"/>
    </source>
</evidence>
<evidence type="ECO:0000269" key="5">
    <source>
    </source>
</evidence>
<evidence type="ECO:0000269" key="6">
    <source>
    </source>
</evidence>
<evidence type="ECO:0000269" key="7">
    <source>
    </source>
</evidence>
<evidence type="ECO:0000269" key="8">
    <source>
    </source>
</evidence>
<evidence type="ECO:0000305" key="9"/>
<evidence type="ECO:0007829" key="10">
    <source>
        <dbReference type="PDB" id="1B0J"/>
    </source>
</evidence>
<evidence type="ECO:0007829" key="11">
    <source>
        <dbReference type="PDB" id="1B0M"/>
    </source>
</evidence>
<evidence type="ECO:0007829" key="12">
    <source>
        <dbReference type="PDB" id="6ACN"/>
    </source>
</evidence>
<evidence type="ECO:0007829" key="13">
    <source>
        <dbReference type="PDB" id="7ACN"/>
    </source>
</evidence>
<gene>
    <name type="primary">ACO2</name>
</gene>
<feature type="transit peptide" description="Mitochondrion">
    <location>
        <begin position="1"/>
        <end position="27"/>
    </location>
</feature>
<feature type="chain" id="PRO_0000000543" description="Aconitate hydratase, mitochondrial">
    <location>
        <begin position="28"/>
        <end position="781"/>
    </location>
</feature>
<feature type="region of interest" description="Disordered" evidence="4">
    <location>
        <begin position="524"/>
        <end position="561"/>
    </location>
</feature>
<feature type="compositionally biased region" description="Basic and acidic residues" evidence="4">
    <location>
        <begin position="524"/>
        <end position="537"/>
    </location>
</feature>
<feature type="compositionally biased region" description="Polar residues" evidence="4">
    <location>
        <begin position="551"/>
        <end position="561"/>
    </location>
</feature>
<feature type="binding site" evidence="5">
    <location>
        <position position="99"/>
    </location>
    <ligand>
        <name>substrate</name>
    </ligand>
</feature>
<feature type="binding site" evidence="5">
    <location>
        <begin position="192"/>
        <end position="194"/>
    </location>
    <ligand>
        <name>substrate</name>
    </ligand>
</feature>
<feature type="binding site" evidence="5 7">
    <location>
        <position position="385"/>
    </location>
    <ligand>
        <name>[4Fe-4S] cluster</name>
        <dbReference type="ChEBI" id="CHEBI:49883"/>
    </ligand>
</feature>
<feature type="binding site" evidence="5 7">
    <location>
        <position position="448"/>
    </location>
    <ligand>
        <name>[4Fe-4S] cluster</name>
        <dbReference type="ChEBI" id="CHEBI:49883"/>
    </ligand>
</feature>
<feature type="binding site" evidence="5 7">
    <location>
        <position position="451"/>
    </location>
    <ligand>
        <name>[4Fe-4S] cluster</name>
        <dbReference type="ChEBI" id="CHEBI:49883"/>
    </ligand>
</feature>
<feature type="binding site" evidence="5">
    <location>
        <position position="474"/>
    </location>
    <ligand>
        <name>substrate</name>
    </ligand>
</feature>
<feature type="binding site" evidence="5">
    <location>
        <position position="479"/>
    </location>
    <ligand>
        <name>substrate</name>
    </ligand>
</feature>
<feature type="binding site" evidence="5">
    <location>
        <position position="607"/>
    </location>
    <ligand>
        <name>substrate</name>
    </ligand>
</feature>
<feature type="binding site" evidence="5">
    <location>
        <begin position="670"/>
        <end position="671"/>
    </location>
    <ligand>
        <name>substrate</name>
    </ligand>
</feature>
<feature type="modified residue" description="Pyrrolidone carboxylic acid" evidence="6">
    <location>
        <position position="28"/>
    </location>
</feature>
<feature type="modified residue" description="N6-succinyllysine" evidence="2">
    <location>
        <position position="31"/>
    </location>
</feature>
<feature type="modified residue" description="N6-acetyllysine; alternate" evidence="2">
    <location>
        <position position="50"/>
    </location>
</feature>
<feature type="modified residue" description="N6-succinyllysine; alternate" evidence="2">
    <location>
        <position position="50"/>
    </location>
</feature>
<feature type="modified residue" description="N6-acetyllysine; alternate" evidence="2">
    <location>
        <position position="138"/>
    </location>
</feature>
<feature type="modified residue" description="N6-succinyllysine; alternate" evidence="2">
    <location>
        <position position="138"/>
    </location>
</feature>
<feature type="modified residue" description="N6-acetyllysine; alternate" evidence="2">
    <location>
        <position position="144"/>
    </location>
</feature>
<feature type="modified residue" description="N6-succinyllysine; alternate" evidence="2">
    <location>
        <position position="144"/>
    </location>
</feature>
<feature type="modified residue" description="N6-acetyllysine; alternate" evidence="2">
    <location>
        <position position="233"/>
    </location>
</feature>
<feature type="modified residue" description="N6-succinyllysine; alternate" evidence="2">
    <location>
        <position position="233"/>
    </location>
</feature>
<feature type="modified residue" description="N6-succinyllysine" evidence="2">
    <location>
        <position position="411"/>
    </location>
</feature>
<feature type="modified residue" description="N6-acetyllysine; alternate" evidence="2">
    <location>
        <position position="517"/>
    </location>
</feature>
<feature type="modified residue" description="N6-succinyllysine; alternate" evidence="2">
    <location>
        <position position="517"/>
    </location>
</feature>
<feature type="modified residue" description="N6-acetyllysine; alternate" evidence="2">
    <location>
        <position position="523"/>
    </location>
</feature>
<feature type="modified residue" description="N6-succinyllysine; alternate" evidence="2">
    <location>
        <position position="523"/>
    </location>
</feature>
<feature type="modified residue" description="N6-succinyllysine" evidence="2">
    <location>
        <position position="549"/>
    </location>
</feature>
<feature type="modified residue" description="Phosphoserine" evidence="1">
    <location>
        <position position="559"/>
    </location>
</feature>
<feature type="modified residue" description="N6-acetyllysine; alternate" evidence="1">
    <location>
        <position position="573"/>
    </location>
</feature>
<feature type="modified residue" description="N6-succinyllysine; alternate" evidence="2">
    <location>
        <position position="573"/>
    </location>
</feature>
<feature type="modified residue" description="N6-succinyllysine" evidence="2">
    <location>
        <position position="577"/>
    </location>
</feature>
<feature type="modified residue" description="N6-succinyllysine" evidence="2">
    <location>
        <position position="591"/>
    </location>
</feature>
<feature type="modified residue" description="N6-acetyllysine; alternate" evidence="1">
    <location>
        <position position="605"/>
    </location>
</feature>
<feature type="modified residue" description="N6-succinyllysine; alternate" evidence="2">
    <location>
        <position position="605"/>
    </location>
</feature>
<feature type="modified residue" description="N6-succinyllysine" evidence="2">
    <location>
        <position position="628"/>
    </location>
</feature>
<feature type="modified residue" description="Phosphoserine" evidence="2">
    <location>
        <position position="670"/>
    </location>
</feature>
<feature type="modified residue" description="N6-succinyllysine" evidence="2">
    <location>
        <position position="689"/>
    </location>
</feature>
<feature type="modified residue" description="N6-acetyllysine; alternate" evidence="2">
    <location>
        <position position="723"/>
    </location>
</feature>
<feature type="modified residue" description="N6-succinyllysine; alternate" evidence="2">
    <location>
        <position position="723"/>
    </location>
</feature>
<feature type="modified residue" description="N6-acetyllysine; alternate" evidence="2">
    <location>
        <position position="730"/>
    </location>
</feature>
<feature type="modified residue" description="N6-succinyllysine; alternate" evidence="2">
    <location>
        <position position="730"/>
    </location>
</feature>
<feature type="modified residue" description="N6-acetyllysine" evidence="2">
    <location>
        <position position="736"/>
    </location>
</feature>
<feature type="modified residue" description="N6-acetyllysine" evidence="2">
    <location>
        <position position="739"/>
    </location>
</feature>
<feature type="modified residue" description="N6-acetyllysine" evidence="2">
    <location>
        <position position="743"/>
    </location>
</feature>
<feature type="strand" evidence="13">
    <location>
        <begin position="33"/>
        <end position="35"/>
    </location>
</feature>
<feature type="strand" evidence="10">
    <location>
        <begin position="38"/>
        <end position="42"/>
    </location>
</feature>
<feature type="helix" evidence="13">
    <location>
        <begin position="45"/>
        <end position="59"/>
    </location>
</feature>
<feature type="helix" evidence="13">
    <location>
        <begin position="65"/>
        <end position="71"/>
    </location>
</feature>
<feature type="turn" evidence="13">
    <location>
        <begin position="77"/>
        <end position="79"/>
    </location>
</feature>
<feature type="turn" evidence="13">
    <location>
        <begin position="84"/>
        <end position="86"/>
    </location>
</feature>
<feature type="strand" evidence="13">
    <location>
        <begin position="87"/>
        <end position="91"/>
    </location>
</feature>
<feature type="strand" evidence="13">
    <location>
        <begin position="94"/>
        <end position="99"/>
    </location>
</feature>
<feature type="helix" evidence="13">
    <location>
        <begin position="100"/>
        <end position="113"/>
    </location>
</feature>
<feature type="strand" evidence="13">
    <location>
        <begin position="122"/>
        <end position="125"/>
    </location>
</feature>
<feature type="strand" evidence="13">
    <location>
        <begin position="132"/>
        <end position="134"/>
    </location>
</feature>
<feature type="helix" evidence="13">
    <location>
        <begin position="136"/>
        <end position="146"/>
    </location>
</feature>
<feature type="helix" evidence="13">
    <location>
        <begin position="148"/>
        <end position="161"/>
    </location>
</feature>
<feature type="strand" evidence="13">
    <location>
        <begin position="164"/>
        <end position="166"/>
    </location>
</feature>
<feature type="helix" evidence="13">
    <location>
        <begin position="173"/>
        <end position="180"/>
    </location>
</feature>
<feature type="strand" evidence="13">
    <location>
        <begin position="187"/>
        <end position="192"/>
    </location>
</feature>
<feature type="helix" evidence="13">
    <location>
        <begin position="195"/>
        <end position="201"/>
    </location>
</feature>
<feature type="strand" evidence="13">
    <location>
        <begin position="204"/>
        <end position="207"/>
    </location>
</feature>
<feature type="helix" evidence="13">
    <location>
        <begin position="210"/>
        <end position="217"/>
    </location>
</feature>
<feature type="strand" evidence="13">
    <location>
        <begin position="222"/>
        <end position="225"/>
    </location>
</feature>
<feature type="strand" evidence="13">
    <location>
        <begin position="228"/>
        <end position="236"/>
    </location>
</feature>
<feature type="helix" evidence="13">
    <location>
        <begin position="244"/>
        <end position="255"/>
    </location>
</feature>
<feature type="turn" evidence="13">
    <location>
        <begin position="257"/>
        <end position="262"/>
    </location>
</feature>
<feature type="strand" evidence="13">
    <location>
        <begin position="263"/>
        <end position="269"/>
    </location>
</feature>
<feature type="helix" evidence="13">
    <location>
        <begin position="270"/>
        <end position="274"/>
    </location>
</feature>
<feature type="helix" evidence="13">
    <location>
        <begin position="277"/>
        <end position="286"/>
    </location>
</feature>
<feature type="helix" evidence="13">
    <location>
        <begin position="287"/>
        <end position="290"/>
    </location>
</feature>
<feature type="strand" evidence="13">
    <location>
        <begin position="293"/>
        <end position="296"/>
    </location>
</feature>
<feature type="helix" evidence="13">
    <location>
        <begin position="301"/>
        <end position="309"/>
    </location>
</feature>
<feature type="helix" evidence="13">
    <location>
        <begin position="313"/>
        <end position="321"/>
    </location>
</feature>
<feature type="helix" evidence="13">
    <location>
        <begin position="323"/>
        <end position="326"/>
    </location>
</feature>
<feature type="strand" evidence="13">
    <location>
        <begin position="335"/>
        <end position="341"/>
    </location>
</feature>
<feature type="helix" evidence="13">
    <location>
        <begin position="342"/>
        <end position="344"/>
    </location>
</feature>
<feature type="strand" evidence="13">
    <location>
        <begin position="348"/>
        <end position="350"/>
    </location>
</feature>
<feature type="strand" evidence="13">
    <location>
        <begin position="352"/>
        <end position="354"/>
    </location>
</feature>
<feature type="strand" evidence="13">
    <location>
        <begin position="358"/>
        <end position="360"/>
    </location>
</feature>
<feature type="helix" evidence="13">
    <location>
        <begin position="361"/>
        <end position="371"/>
    </location>
</feature>
<feature type="strand" evidence="13">
    <location>
        <begin position="376"/>
        <end position="382"/>
    </location>
</feature>
<feature type="turn" evidence="13">
    <location>
        <begin position="384"/>
        <end position="386"/>
    </location>
</feature>
<feature type="helix" evidence="13">
    <location>
        <begin position="390"/>
        <end position="404"/>
    </location>
</feature>
<feature type="turn" evidence="13">
    <location>
        <begin position="405"/>
        <end position="407"/>
    </location>
</feature>
<feature type="strand" evidence="13">
    <location>
        <begin position="411"/>
        <end position="416"/>
    </location>
</feature>
<feature type="helix" evidence="13">
    <location>
        <begin position="421"/>
        <end position="429"/>
    </location>
</feature>
<feature type="helix" evidence="13">
    <location>
        <begin position="432"/>
        <end position="438"/>
    </location>
</feature>
<feature type="strand" evidence="13">
    <location>
        <begin position="441"/>
        <end position="443"/>
    </location>
</feature>
<feature type="helix" evidence="13">
    <location>
        <begin position="449"/>
        <end position="452"/>
    </location>
</feature>
<feature type="strand" evidence="13">
    <location>
        <begin position="466"/>
        <end position="473"/>
    </location>
</feature>
<feature type="turn" evidence="13">
    <location>
        <begin position="477"/>
        <end position="481"/>
    </location>
</feature>
<feature type="strand" evidence="13">
    <location>
        <begin position="486"/>
        <end position="490"/>
    </location>
</feature>
<feature type="helix" evidence="13">
    <location>
        <begin position="493"/>
        <end position="502"/>
    </location>
</feature>
<feature type="strand" evidence="13">
    <location>
        <begin position="504"/>
        <end position="506"/>
    </location>
</feature>
<feature type="turn" evidence="13">
    <location>
        <begin position="509"/>
        <end position="511"/>
    </location>
</feature>
<feature type="strand" evidence="10">
    <location>
        <begin position="513"/>
        <end position="515"/>
    </location>
</feature>
<feature type="strand" evidence="10">
    <location>
        <begin position="521"/>
        <end position="523"/>
    </location>
</feature>
<feature type="turn" evidence="11">
    <location>
        <begin position="549"/>
        <end position="551"/>
    </location>
</feature>
<feature type="strand" evidence="13">
    <location>
        <begin position="563"/>
        <end position="565"/>
    </location>
</feature>
<feature type="strand" evidence="13">
    <location>
        <begin position="579"/>
        <end position="588"/>
    </location>
</feature>
<feature type="helix" evidence="13">
    <location>
        <begin position="594"/>
        <end position="597"/>
    </location>
</feature>
<feature type="helix" evidence="13">
    <location>
        <begin position="601"/>
        <end position="606"/>
    </location>
</feature>
<feature type="helix" evidence="13">
    <location>
        <begin position="610"/>
        <end position="613"/>
    </location>
</feature>
<feature type="helix" evidence="13">
    <location>
        <begin position="614"/>
        <end position="616"/>
    </location>
</feature>
<feature type="turn" evidence="13">
    <location>
        <begin position="617"/>
        <end position="620"/>
    </location>
</feature>
<feature type="strand" evidence="13">
    <location>
        <begin position="621"/>
        <end position="623"/>
    </location>
</feature>
<feature type="turn" evidence="13">
    <location>
        <begin position="624"/>
        <end position="627"/>
    </location>
</feature>
<feature type="strand" evidence="12">
    <location>
        <begin position="628"/>
        <end position="630"/>
    </location>
</feature>
<feature type="turn" evidence="13">
    <location>
        <begin position="635"/>
        <end position="637"/>
    </location>
</feature>
<feature type="helix" evidence="13">
    <location>
        <begin position="643"/>
        <end position="652"/>
    </location>
</feature>
<feature type="strand" evidence="13">
    <location>
        <begin position="657"/>
        <end position="660"/>
    </location>
</feature>
<feature type="strand" evidence="13">
    <location>
        <begin position="663"/>
        <end position="665"/>
    </location>
</feature>
<feature type="strand" evidence="12">
    <location>
        <begin position="667"/>
        <end position="669"/>
    </location>
</feature>
<feature type="helix" evidence="13">
    <location>
        <begin position="673"/>
        <end position="680"/>
    </location>
</feature>
<feature type="strand" evidence="13">
    <location>
        <begin position="683"/>
        <end position="689"/>
    </location>
</feature>
<feature type="helix" evidence="13">
    <location>
        <begin position="693"/>
        <end position="701"/>
    </location>
</feature>
<feature type="strand" evidence="13">
    <location>
        <begin position="705"/>
        <end position="711"/>
    </location>
</feature>
<feature type="helix" evidence="13">
    <location>
        <begin position="712"/>
        <end position="717"/>
    </location>
</feature>
<feature type="strand" evidence="13">
    <location>
        <begin position="723"/>
        <end position="727"/>
    </location>
</feature>
<feature type="helix" evidence="13">
    <location>
        <begin position="729"/>
        <end position="731"/>
    </location>
</feature>
<feature type="strand" evidence="13">
    <location>
        <begin position="738"/>
        <end position="743"/>
    </location>
</feature>
<feature type="strand" evidence="13">
    <location>
        <begin position="749"/>
        <end position="755"/>
    </location>
</feature>
<feature type="helix" evidence="13">
    <location>
        <begin position="760"/>
        <end position="768"/>
    </location>
</feature>
<feature type="helix" evidence="13">
    <location>
        <begin position="771"/>
        <end position="778"/>
    </location>
</feature>
<sequence>MAPYSLLVTRLQKALGVRQYHVASVLCQRAKVAMSHFEPHEYIRYDLLEKNIDIVRKRLNRPLTLSEKIVYGHLDDPANQEIERGKTYLRLRPDRVAMQDATAQMAMLQFISSGLPKVAVPSTIHCDHLIEAQLGGEKDLRRAKDINQEVYNFLATAGAKYGVGFWRPGSGIIHQIILENYAYPGVLLIGTDSHTPNGGGLGGICIGVGGADAVDVMAGIPWELKCPKVIGVKLTGSLSGWTSPKDVILKVAGILTVKGGTGAIVEYHGPGVDSISCTGMATICNMGAEIGATTSVFPYNHRMKKYLSKTGRADIANLADEFKDHLVPDPGCHYDQVIEINLSELKPHINGPFTPDLAHPVAEVGSVAEKEGWPLDIRVGLIGSCTNSSYEDMGRSAAVAKQALAHGLKCKSQFTITPGSEQIRATIERDGYAQVLRDVGGIVLANACGPCIGQWDRKDIKKGEKNTIVTSYNRNFTGRNDANPETHAFVTSPEIVTALAIAGTLKFNPETDFLTGKDGKKFKLEAPDADELPRAEFDPGQDTYQHPPKDSSGQRVDVSPTSQRLQLLEPFDKWDGKDLEDLQILIKVKGKCTTDHISAAGPWLKFRGHLDNISNNLLIGAINIENRKANSVRNAVTQEFGPVPDTARYYKQHGIRWVVIGDENYGEGSSREHRALEPRHLGGRAIITKSFARIHETNLKKQGLLPLTFADPADYNKIHPVDKLTIQGLKDFAPGKPLKCIIKHPNGTQETILLNHTFNETQIEWFRAGSALNRMKELQQK</sequence>
<name>ACON_PIG</name>
<accession>P16276</accession>
<comment type="function">
    <text evidence="5">Catalyzes the isomerization of citrate to isocitrate via cis-aconitate.</text>
</comment>
<comment type="catalytic activity">
    <reaction evidence="5">
        <text>citrate = D-threo-isocitrate</text>
        <dbReference type="Rhea" id="RHEA:10336"/>
        <dbReference type="ChEBI" id="CHEBI:15562"/>
        <dbReference type="ChEBI" id="CHEBI:16947"/>
        <dbReference type="EC" id="4.2.1.3"/>
    </reaction>
</comment>
<comment type="cofactor">
    <cofactor evidence="5 7 8">
        <name>[4Fe-4S] cluster</name>
        <dbReference type="ChEBI" id="CHEBI:49883"/>
    </cofactor>
    <text evidence="5 7">Binds 1 [4Fe-4S] cluster per subunit. Binding of a [3Fe-4S] cluster leads to an inactive enzyme.</text>
</comment>
<comment type="pathway">
    <text>Carbohydrate metabolism; tricarboxylic acid cycle; isocitrate from oxaloacetate: step 2/2.</text>
</comment>
<comment type="subunit">
    <text evidence="5 7">Monomer.</text>
</comment>
<comment type="subcellular location">
    <subcellularLocation>
        <location evidence="6">Mitochondrion</location>
    </subcellularLocation>
</comment>
<comment type="PTM">
    <text evidence="3">Forms covalent cross-links mediated by transglutaminase TGM2, between a glutamine and the epsilon-amino group of a lysine residue, forming homopolymers and heteropolymers.</text>
</comment>
<comment type="similarity">
    <text evidence="9">Belongs to the aconitase/IPM isomerase family.</text>
</comment>
<reference key="1">
    <citation type="journal article" date="1990" name="J. Biol. Chem.">
        <title>Cloning and structural characterization of porcine heart aconitase.</title>
        <authorList>
            <person name="Zheng L."/>
            <person name="Andrews P.C."/>
            <person name="Hermodson M.A."/>
            <person name="Dixon J.E."/>
            <person name="Zalkin H."/>
        </authorList>
    </citation>
    <scope>NUCLEOTIDE SEQUENCE [MRNA]</scope>
    <scope>PARTIAL PROTEIN SEQUENCE</scope>
    <scope>PYROGLUTAMATE FORMATION AT GLN-28</scope>
    <scope>SUBCELLULAR LOCATION</scope>
    <source>
        <tissue>Heart</tissue>
    </source>
</reference>
<reference key="2">
    <citation type="journal article" date="2016" name="Structure">
        <title>Structural/functional properties of human NFU1, an intermediate [4Fe-4S] carrier in human mitochondrial iron-sulfur cluster biogenesis.</title>
        <authorList>
            <person name="Cai K."/>
            <person name="Liu G."/>
            <person name="Frederick R.O."/>
            <person name="Xiao R."/>
            <person name="Montelione G.T."/>
            <person name="Markley J.L."/>
        </authorList>
    </citation>
    <scope>COFACTOR</scope>
</reference>
<reference key="3">
    <citation type="journal article" date="1989" name="Proc. Natl. Acad. Sci. U.S.A.">
        <title>Structure of activated aconitase: formation of the [4Fe-4S] cluster in the crystal.</title>
        <authorList>
            <person name="Robbins A.H."/>
            <person name="Stout C.D."/>
        </authorList>
    </citation>
    <scope>X-RAY CRYSTALLOGRAPHY (2.1 ANGSTROMS) OF 29-781 IN COMPLEX WITH IRON-SULFUR</scope>
    <scope>COFACTOR</scope>
    <source>
        <tissue>Heart</tissue>
    </source>
</reference>
<reference key="4">
    <citation type="journal article" date="1989" name="Proteins">
        <title>The structure of aconitase.</title>
        <authorList>
            <person name="Robbins A.H."/>
            <person name="Stout C.D."/>
        </authorList>
    </citation>
    <scope>X-RAY CRYSTALLOGRAPHY (2.1 ANGSTROMS)</scope>
</reference>
<reference key="5">
    <citation type="journal article" date="1999" name="Protein Sci.">
        <title>The mechanism of aconitase: 1.8 A resolution crystal structure of the S642A:citrate complex.</title>
        <authorList>
            <person name="Lloyd S.J."/>
            <person name="Lauble H."/>
            <person name="Prasad G.S."/>
            <person name="Stout C.D."/>
        </authorList>
    </citation>
    <scope>X-RAY CRYSTALLOGRAPHY (1.81 ANGSTROMS) OF 29-779 OF MUTANT ALA-669 IN COMPLEX WITH IRON-SULFUR; THE SUBSTRATE CITRATE AND ISOCITRATE</scope>
    <scope>COFACTOR</scope>
    <scope>FUNCTION</scope>
    <scope>CATALYTIC ACTIVITY</scope>
    <scope>REACTION MECHANISM</scope>
</reference>
<dbReference type="EC" id="4.2.1.3" evidence="5"/>
<dbReference type="EMBL" id="J05224">
    <property type="protein sequence ID" value="AAA30987.1"/>
    <property type="molecule type" value="mRNA"/>
</dbReference>
<dbReference type="PIR" id="A35544">
    <property type="entry name" value="A35544"/>
</dbReference>
<dbReference type="RefSeq" id="NP_999119.1">
    <property type="nucleotide sequence ID" value="NM_213954.1"/>
</dbReference>
<dbReference type="PDB" id="1B0J">
    <property type="method" value="X-ray"/>
    <property type="resolution" value="2.50 A"/>
    <property type="chains" value="A=28-781"/>
</dbReference>
<dbReference type="PDB" id="1B0K">
    <property type="method" value="X-ray"/>
    <property type="resolution" value="2.50 A"/>
    <property type="chains" value="A=29-781"/>
</dbReference>
<dbReference type="PDB" id="1B0M">
    <property type="method" value="X-ray"/>
    <property type="resolution" value="2.50 A"/>
    <property type="chains" value="A=29-781"/>
</dbReference>
<dbReference type="PDB" id="5ACN">
    <property type="method" value="X-ray"/>
    <property type="resolution" value="2.10 A"/>
    <property type="chains" value="A=29-781"/>
</dbReference>
<dbReference type="PDB" id="6ACN">
    <property type="method" value="X-ray"/>
    <property type="resolution" value="2.50 A"/>
    <property type="chains" value="A=29-781"/>
</dbReference>
<dbReference type="PDB" id="7ACN">
    <property type="method" value="X-ray"/>
    <property type="resolution" value="2.00 A"/>
    <property type="chains" value="A=29-781"/>
</dbReference>
<dbReference type="PDBsum" id="1B0J"/>
<dbReference type="PDBsum" id="1B0K"/>
<dbReference type="PDBsum" id="1B0M"/>
<dbReference type="PDBsum" id="5ACN"/>
<dbReference type="PDBsum" id="6ACN"/>
<dbReference type="PDBsum" id="7ACN"/>
<dbReference type="SMR" id="P16276"/>
<dbReference type="FunCoup" id="P16276">
    <property type="interactions" value="1325"/>
</dbReference>
<dbReference type="STRING" id="9823.ENSSSCP00000000070"/>
<dbReference type="CarbonylDB" id="P16276"/>
<dbReference type="PaxDb" id="9823-ENSSSCP00000000070"/>
<dbReference type="PeptideAtlas" id="P16276"/>
<dbReference type="GeneID" id="396999"/>
<dbReference type="KEGG" id="ssc:396999"/>
<dbReference type="CTD" id="50"/>
<dbReference type="eggNOG" id="KOG0453">
    <property type="taxonomic scope" value="Eukaryota"/>
</dbReference>
<dbReference type="InParanoid" id="P16276"/>
<dbReference type="OrthoDB" id="2224430at2759"/>
<dbReference type="BRENDA" id="4.2.1.3">
    <property type="organism ID" value="6170"/>
</dbReference>
<dbReference type="UniPathway" id="UPA00223">
    <property type="reaction ID" value="UER00718"/>
</dbReference>
<dbReference type="EvolutionaryTrace" id="P16276"/>
<dbReference type="Proteomes" id="UP000008227">
    <property type="component" value="Unplaced"/>
</dbReference>
<dbReference type="Proteomes" id="UP000314985">
    <property type="component" value="Unplaced"/>
</dbReference>
<dbReference type="Proteomes" id="UP000694570">
    <property type="component" value="Unplaced"/>
</dbReference>
<dbReference type="Proteomes" id="UP000694571">
    <property type="component" value="Unplaced"/>
</dbReference>
<dbReference type="Proteomes" id="UP000694720">
    <property type="component" value="Unplaced"/>
</dbReference>
<dbReference type="Proteomes" id="UP000694722">
    <property type="component" value="Unplaced"/>
</dbReference>
<dbReference type="Proteomes" id="UP000694723">
    <property type="component" value="Unplaced"/>
</dbReference>
<dbReference type="Proteomes" id="UP000694724">
    <property type="component" value="Unplaced"/>
</dbReference>
<dbReference type="Proteomes" id="UP000694725">
    <property type="component" value="Unplaced"/>
</dbReference>
<dbReference type="Proteomes" id="UP000694726">
    <property type="component" value="Unplaced"/>
</dbReference>
<dbReference type="Proteomes" id="UP000694727">
    <property type="component" value="Unplaced"/>
</dbReference>
<dbReference type="Proteomes" id="UP000694728">
    <property type="component" value="Unplaced"/>
</dbReference>
<dbReference type="GO" id="GO:0005829">
    <property type="term" value="C:cytosol"/>
    <property type="evidence" value="ECO:0000318"/>
    <property type="project" value="GO_Central"/>
</dbReference>
<dbReference type="GO" id="GO:0005739">
    <property type="term" value="C:mitochondrion"/>
    <property type="evidence" value="ECO:0000318"/>
    <property type="project" value="GO_Central"/>
</dbReference>
<dbReference type="GO" id="GO:0051539">
    <property type="term" value="F:4 iron, 4 sulfur cluster binding"/>
    <property type="evidence" value="ECO:0000318"/>
    <property type="project" value="GO_Central"/>
</dbReference>
<dbReference type="GO" id="GO:0003994">
    <property type="term" value="F:aconitate hydratase activity"/>
    <property type="evidence" value="ECO:0000318"/>
    <property type="project" value="GO_Central"/>
</dbReference>
<dbReference type="GO" id="GO:0046872">
    <property type="term" value="F:metal ion binding"/>
    <property type="evidence" value="ECO:0007669"/>
    <property type="project" value="UniProtKB-KW"/>
</dbReference>
<dbReference type="GO" id="GO:0006099">
    <property type="term" value="P:tricarboxylic acid cycle"/>
    <property type="evidence" value="ECO:0000318"/>
    <property type="project" value="GO_Central"/>
</dbReference>
<dbReference type="CDD" id="cd01578">
    <property type="entry name" value="AcnA_Mitochon_Swivel"/>
    <property type="match status" value="1"/>
</dbReference>
<dbReference type="CDD" id="cd01584">
    <property type="entry name" value="AcnA_Mitochondrial"/>
    <property type="match status" value="1"/>
</dbReference>
<dbReference type="FunFam" id="3.20.19.10:FF:000002">
    <property type="entry name" value="Aconitate hydratase, mitochondrial"/>
    <property type="match status" value="1"/>
</dbReference>
<dbReference type="FunFam" id="3.30.499.10:FF:000003">
    <property type="entry name" value="Aconitate hydratase, mitochondrial"/>
    <property type="match status" value="1"/>
</dbReference>
<dbReference type="FunFam" id="3.30.499.10:FF:000004">
    <property type="entry name" value="Aconitate hydratase, mitochondrial"/>
    <property type="match status" value="1"/>
</dbReference>
<dbReference type="FunFam" id="3.40.1060.10:FF:000001">
    <property type="entry name" value="Aconitate hydratase, mitochondrial"/>
    <property type="match status" value="1"/>
</dbReference>
<dbReference type="Gene3D" id="3.40.1060.10">
    <property type="entry name" value="Aconitase, Domain 2"/>
    <property type="match status" value="1"/>
</dbReference>
<dbReference type="Gene3D" id="3.30.499.10">
    <property type="entry name" value="Aconitase, domain 3"/>
    <property type="match status" value="2"/>
</dbReference>
<dbReference type="Gene3D" id="3.20.19.10">
    <property type="entry name" value="Aconitase, domain 4"/>
    <property type="match status" value="1"/>
</dbReference>
<dbReference type="InterPro" id="IPR015931">
    <property type="entry name" value="Acnase/IPM_dHydase_lsu_aba_1/3"/>
</dbReference>
<dbReference type="InterPro" id="IPR001030">
    <property type="entry name" value="Acoase/IPM_deHydtase_lsu_aba"/>
</dbReference>
<dbReference type="InterPro" id="IPR015928">
    <property type="entry name" value="Aconitase/3IPM_dehydase_swvl"/>
</dbReference>
<dbReference type="InterPro" id="IPR050926">
    <property type="entry name" value="Aconitase/IPM_isomerase"/>
</dbReference>
<dbReference type="InterPro" id="IPR018136">
    <property type="entry name" value="Aconitase_4Fe-4S_BS"/>
</dbReference>
<dbReference type="InterPro" id="IPR036008">
    <property type="entry name" value="Aconitase_4Fe-4S_dom"/>
</dbReference>
<dbReference type="InterPro" id="IPR015932">
    <property type="entry name" value="Aconitase_dom2"/>
</dbReference>
<dbReference type="InterPro" id="IPR006248">
    <property type="entry name" value="Aconitase_mito-like"/>
</dbReference>
<dbReference type="InterPro" id="IPR000573">
    <property type="entry name" value="AconitaseA/IPMdHydase_ssu_swvl"/>
</dbReference>
<dbReference type="NCBIfam" id="TIGR01340">
    <property type="entry name" value="aconitase_mito"/>
    <property type="match status" value="1"/>
</dbReference>
<dbReference type="NCBIfam" id="NF005558">
    <property type="entry name" value="PRK07229.1"/>
    <property type="match status" value="1"/>
</dbReference>
<dbReference type="PANTHER" id="PTHR43160">
    <property type="entry name" value="ACONITATE HYDRATASE B"/>
    <property type="match status" value="1"/>
</dbReference>
<dbReference type="PANTHER" id="PTHR43160:SF3">
    <property type="entry name" value="ACONITATE HYDRATASE, MITOCHONDRIAL"/>
    <property type="match status" value="1"/>
</dbReference>
<dbReference type="Pfam" id="PF00330">
    <property type="entry name" value="Aconitase"/>
    <property type="match status" value="1"/>
</dbReference>
<dbReference type="Pfam" id="PF00694">
    <property type="entry name" value="Aconitase_C"/>
    <property type="match status" value="1"/>
</dbReference>
<dbReference type="PRINTS" id="PR00415">
    <property type="entry name" value="ACONITASE"/>
</dbReference>
<dbReference type="SUPFAM" id="SSF53732">
    <property type="entry name" value="Aconitase iron-sulfur domain"/>
    <property type="match status" value="1"/>
</dbReference>
<dbReference type="SUPFAM" id="SSF52016">
    <property type="entry name" value="LeuD/IlvD-like"/>
    <property type="match status" value="1"/>
</dbReference>
<dbReference type="PROSITE" id="PS00450">
    <property type="entry name" value="ACONITASE_1"/>
    <property type="match status" value="1"/>
</dbReference>
<dbReference type="PROSITE" id="PS01244">
    <property type="entry name" value="ACONITASE_2"/>
    <property type="match status" value="1"/>
</dbReference>
<proteinExistence type="evidence at protein level"/>